<protein>
    <recommendedName>
        <fullName evidence="1">Ribonuclease Z</fullName>
        <shortName evidence="1">RNase Z</shortName>
        <ecNumber evidence="1">3.1.26.11</ecNumber>
    </recommendedName>
    <alternativeName>
        <fullName evidence="1">tRNA 3 endonuclease</fullName>
    </alternativeName>
    <alternativeName>
        <fullName evidence="1">tRNase Z</fullName>
    </alternativeName>
</protein>
<organism>
    <name type="scientific">Exiguobacterium sibiricum (strain DSM 17290 / CCUG 55495 / CIP 109462 / JCM 13490 / 255-15)</name>
    <dbReference type="NCBI Taxonomy" id="262543"/>
    <lineage>
        <taxon>Bacteria</taxon>
        <taxon>Bacillati</taxon>
        <taxon>Bacillota</taxon>
        <taxon>Bacilli</taxon>
        <taxon>Bacillales</taxon>
        <taxon>Bacillales Family XII. Incertae Sedis</taxon>
        <taxon>Exiguobacterium</taxon>
    </lineage>
</organism>
<accession>B1YLU8</accession>
<sequence length="301" mass="33642">MEFYFLGTGAGMPSKQRNVSAIALLHPKMTWLFDCGEATQHQMLHSPIKPRKVSTIFITHLHGDHIFGLPGFISTRAALEGTTLLTIFGPKGIKEWLEATLRITGTYLRYPLDVIEVEAGQTYEQEGFHIHVEALEHRFLAYGYRIEGQEEKGALHVEALKQLGVPSGPLYRQIKQKETFVFEGTEYQSTDFLGEPKPGIKLAVLGDTVPCEGSLRLAEKVDVLVHEATFADSEQDHAGRFGHSTARQAAEIALKAGVKKLLLTHISARYVDQEQRLEAEAREVFEESYLMTDHQSVVIKG</sequence>
<evidence type="ECO:0000255" key="1">
    <source>
        <dbReference type="HAMAP-Rule" id="MF_01818"/>
    </source>
</evidence>
<comment type="function">
    <text evidence="1">Zinc phosphodiesterase, which displays some tRNA 3'-processing endonuclease activity. Probably involved in tRNA maturation, by removing a 3'-trailer from precursor tRNA.</text>
</comment>
<comment type="catalytic activity">
    <reaction evidence="1">
        <text>Endonucleolytic cleavage of RNA, removing extra 3' nucleotides from tRNA precursor, generating 3' termini of tRNAs. A 3'-hydroxy group is left at the tRNA terminus and a 5'-phosphoryl group is left at the trailer molecule.</text>
        <dbReference type="EC" id="3.1.26.11"/>
    </reaction>
</comment>
<comment type="cofactor">
    <cofactor evidence="1">
        <name>Zn(2+)</name>
        <dbReference type="ChEBI" id="CHEBI:29105"/>
    </cofactor>
    <text evidence="1">Binds 2 Zn(2+) ions.</text>
</comment>
<comment type="subunit">
    <text evidence="1">Homodimer.</text>
</comment>
<comment type="similarity">
    <text evidence="1">Belongs to the RNase Z family.</text>
</comment>
<reference key="1">
    <citation type="submission" date="2008-04" db="EMBL/GenBank/DDBJ databases">
        <title>Complete sequence of chromosome of Exiguobacterium sibiricum 255-15.</title>
        <authorList>
            <consortium name="US DOE Joint Genome Institute"/>
            <person name="Copeland A."/>
            <person name="Lucas S."/>
            <person name="Lapidus A."/>
            <person name="Glavina del Rio T."/>
            <person name="Dalin E."/>
            <person name="Tice H."/>
            <person name="Bruce D."/>
            <person name="Goodwin L."/>
            <person name="Pitluck S."/>
            <person name="Kiss H."/>
            <person name="Chertkov O."/>
            <person name="Monk C."/>
            <person name="Brettin T."/>
            <person name="Detter J.C."/>
            <person name="Han C."/>
            <person name="Kuske C.R."/>
            <person name="Schmutz J."/>
            <person name="Larimer F."/>
            <person name="Land M."/>
            <person name="Hauser L."/>
            <person name="Kyrpides N."/>
            <person name="Mikhailova N."/>
            <person name="Vishnivetskaya T."/>
            <person name="Rodrigues D.F."/>
            <person name="Gilichinsky D."/>
            <person name="Tiedje J."/>
            <person name="Richardson P."/>
        </authorList>
    </citation>
    <scope>NUCLEOTIDE SEQUENCE [LARGE SCALE GENOMIC DNA]</scope>
    <source>
        <strain>DSM 17290 / CCUG 55495 / CIP 109462 / JCM 13490 / 255-15</strain>
    </source>
</reference>
<feature type="chain" id="PRO_1000187961" description="Ribonuclease Z">
    <location>
        <begin position="1"/>
        <end position="301"/>
    </location>
</feature>
<feature type="active site" description="Proton acceptor" evidence="1">
    <location>
        <position position="64"/>
    </location>
</feature>
<feature type="binding site" evidence="1">
    <location>
        <position position="60"/>
    </location>
    <ligand>
        <name>Zn(2+)</name>
        <dbReference type="ChEBI" id="CHEBI:29105"/>
        <label>1</label>
        <note>catalytic</note>
    </ligand>
</feature>
<feature type="binding site" evidence="1">
    <location>
        <position position="62"/>
    </location>
    <ligand>
        <name>Zn(2+)</name>
        <dbReference type="ChEBI" id="CHEBI:29105"/>
        <label>1</label>
        <note>catalytic</note>
    </ligand>
</feature>
<feature type="binding site" evidence="1">
    <location>
        <position position="64"/>
    </location>
    <ligand>
        <name>Zn(2+)</name>
        <dbReference type="ChEBI" id="CHEBI:29105"/>
        <label>2</label>
        <note>catalytic</note>
    </ligand>
</feature>
<feature type="binding site" evidence="1">
    <location>
        <position position="65"/>
    </location>
    <ligand>
        <name>Zn(2+)</name>
        <dbReference type="ChEBI" id="CHEBI:29105"/>
        <label>2</label>
        <note>catalytic</note>
    </ligand>
</feature>
<feature type="binding site" evidence="1">
    <location>
        <position position="137"/>
    </location>
    <ligand>
        <name>Zn(2+)</name>
        <dbReference type="ChEBI" id="CHEBI:29105"/>
        <label>1</label>
        <note>catalytic</note>
    </ligand>
</feature>
<feature type="binding site" evidence="1">
    <location>
        <position position="207"/>
    </location>
    <ligand>
        <name>Zn(2+)</name>
        <dbReference type="ChEBI" id="CHEBI:29105"/>
        <label>1</label>
        <note>catalytic</note>
    </ligand>
</feature>
<feature type="binding site" evidence="1">
    <location>
        <position position="207"/>
    </location>
    <ligand>
        <name>Zn(2+)</name>
        <dbReference type="ChEBI" id="CHEBI:29105"/>
        <label>2</label>
        <note>catalytic</note>
    </ligand>
</feature>
<feature type="binding site" evidence="1">
    <location>
        <position position="265"/>
    </location>
    <ligand>
        <name>Zn(2+)</name>
        <dbReference type="ChEBI" id="CHEBI:29105"/>
        <label>2</label>
        <note>catalytic</note>
    </ligand>
</feature>
<dbReference type="EC" id="3.1.26.11" evidence="1"/>
<dbReference type="EMBL" id="CP001022">
    <property type="protein sequence ID" value="ACB60431.1"/>
    <property type="molecule type" value="Genomic_DNA"/>
</dbReference>
<dbReference type="RefSeq" id="WP_012369855.1">
    <property type="nucleotide sequence ID" value="NC_010556.1"/>
</dbReference>
<dbReference type="SMR" id="B1YLU8"/>
<dbReference type="STRING" id="262543.Exig_0951"/>
<dbReference type="KEGG" id="esi:Exig_0951"/>
<dbReference type="eggNOG" id="COG1234">
    <property type="taxonomic scope" value="Bacteria"/>
</dbReference>
<dbReference type="HOGENOM" id="CLU_031317_2_0_9"/>
<dbReference type="OrthoDB" id="9800940at2"/>
<dbReference type="Proteomes" id="UP000001681">
    <property type="component" value="Chromosome"/>
</dbReference>
<dbReference type="GO" id="GO:0042781">
    <property type="term" value="F:3'-tRNA processing endoribonuclease activity"/>
    <property type="evidence" value="ECO:0007669"/>
    <property type="project" value="UniProtKB-UniRule"/>
</dbReference>
<dbReference type="GO" id="GO:0008270">
    <property type="term" value="F:zinc ion binding"/>
    <property type="evidence" value="ECO:0007669"/>
    <property type="project" value="UniProtKB-UniRule"/>
</dbReference>
<dbReference type="CDD" id="cd07717">
    <property type="entry name" value="RNaseZ_ZiPD-like_MBL-fold"/>
    <property type="match status" value="1"/>
</dbReference>
<dbReference type="FunFam" id="3.60.15.10:FF:000002">
    <property type="entry name" value="Ribonuclease Z"/>
    <property type="match status" value="1"/>
</dbReference>
<dbReference type="Gene3D" id="3.60.15.10">
    <property type="entry name" value="Ribonuclease Z/Hydroxyacylglutathione hydrolase-like"/>
    <property type="match status" value="1"/>
</dbReference>
<dbReference type="HAMAP" id="MF_01818">
    <property type="entry name" value="RNase_Z_BN"/>
    <property type="match status" value="1"/>
</dbReference>
<dbReference type="InterPro" id="IPR001279">
    <property type="entry name" value="Metallo-B-lactamas"/>
</dbReference>
<dbReference type="InterPro" id="IPR036866">
    <property type="entry name" value="RibonucZ/Hydroxyglut_hydro"/>
</dbReference>
<dbReference type="InterPro" id="IPR013471">
    <property type="entry name" value="RNase_Z/BN"/>
</dbReference>
<dbReference type="NCBIfam" id="NF000801">
    <property type="entry name" value="PRK00055.1-3"/>
    <property type="match status" value="1"/>
</dbReference>
<dbReference type="NCBIfam" id="TIGR02651">
    <property type="entry name" value="RNase_Z"/>
    <property type="match status" value="1"/>
</dbReference>
<dbReference type="PANTHER" id="PTHR46018">
    <property type="entry name" value="ZINC PHOSPHODIESTERASE ELAC PROTEIN 1"/>
    <property type="match status" value="1"/>
</dbReference>
<dbReference type="PANTHER" id="PTHR46018:SF2">
    <property type="entry name" value="ZINC PHOSPHODIESTERASE ELAC PROTEIN 1"/>
    <property type="match status" value="1"/>
</dbReference>
<dbReference type="Pfam" id="PF12706">
    <property type="entry name" value="Lactamase_B_2"/>
    <property type="match status" value="2"/>
</dbReference>
<dbReference type="SUPFAM" id="SSF56281">
    <property type="entry name" value="Metallo-hydrolase/oxidoreductase"/>
    <property type="match status" value="1"/>
</dbReference>
<keyword id="KW-0255">Endonuclease</keyword>
<keyword id="KW-0378">Hydrolase</keyword>
<keyword id="KW-0479">Metal-binding</keyword>
<keyword id="KW-0540">Nuclease</keyword>
<keyword id="KW-1185">Reference proteome</keyword>
<keyword id="KW-0819">tRNA processing</keyword>
<keyword id="KW-0862">Zinc</keyword>
<proteinExistence type="inferred from homology"/>
<gene>
    <name evidence="1" type="primary">rnz</name>
    <name type="ordered locus">Exig_0951</name>
</gene>
<name>RNZ_EXIS2</name>